<accession>Q2G2U8</accession>
<dbReference type="EMBL" id="CP000253">
    <property type="protein sequence ID" value="ABD29762.1"/>
    <property type="molecule type" value="Genomic_DNA"/>
</dbReference>
<dbReference type="RefSeq" id="WP_000060776.1">
    <property type="nucleotide sequence ID" value="NZ_LS483365.1"/>
</dbReference>
<dbReference type="RefSeq" id="YP_499187.1">
    <property type="nucleotide sequence ID" value="NC_007795.1"/>
</dbReference>
<dbReference type="SMR" id="Q2G2U8"/>
<dbReference type="STRING" id="93061.SAOUHSC_00625"/>
<dbReference type="PaxDb" id="1280-SAXN108_0688"/>
<dbReference type="GeneID" id="3920035"/>
<dbReference type="KEGG" id="sao:SAOUHSC_00625"/>
<dbReference type="PATRIC" id="fig|93061.5.peg.561"/>
<dbReference type="eggNOG" id="COG1009">
    <property type="taxonomic scope" value="Bacteria"/>
</dbReference>
<dbReference type="HOGENOM" id="CLU_007100_2_1_9"/>
<dbReference type="OrthoDB" id="9807568at2"/>
<dbReference type="PRO" id="PR:Q2G2U8"/>
<dbReference type="Proteomes" id="UP000008816">
    <property type="component" value="Chromosome"/>
</dbReference>
<dbReference type="GO" id="GO:0005886">
    <property type="term" value="C:plasma membrane"/>
    <property type="evidence" value="ECO:0007669"/>
    <property type="project" value="UniProtKB-SubCell"/>
</dbReference>
<dbReference type="GO" id="GO:0015297">
    <property type="term" value="F:antiporter activity"/>
    <property type="evidence" value="ECO:0007669"/>
    <property type="project" value="UniProtKB-KW"/>
</dbReference>
<dbReference type="GO" id="GO:0006811">
    <property type="term" value="P:monoatomic ion transport"/>
    <property type="evidence" value="ECO:0007669"/>
    <property type="project" value="UniProtKB-KW"/>
</dbReference>
<dbReference type="InterPro" id="IPR050616">
    <property type="entry name" value="CPA3_Na-H_Antiporter_A"/>
</dbReference>
<dbReference type="InterPro" id="IPR025383">
    <property type="entry name" value="MrpA_C/MbhD"/>
</dbReference>
<dbReference type="InterPro" id="IPR046806">
    <property type="entry name" value="MrpA_C/MbhE"/>
</dbReference>
<dbReference type="InterPro" id="IPR001750">
    <property type="entry name" value="ND/Mrp_TM"/>
</dbReference>
<dbReference type="InterPro" id="IPR001516">
    <property type="entry name" value="Proton_antipo_N"/>
</dbReference>
<dbReference type="NCBIfam" id="NF009286">
    <property type="entry name" value="PRK12646.1"/>
    <property type="match status" value="1"/>
</dbReference>
<dbReference type="PANTHER" id="PTHR43373">
    <property type="entry name" value="NA(+)/H(+) ANTIPORTER SUBUNIT"/>
    <property type="match status" value="1"/>
</dbReference>
<dbReference type="PANTHER" id="PTHR43373:SF1">
    <property type="entry name" value="NA(+)_H(+) ANTIPORTER SUBUNIT A"/>
    <property type="match status" value="1"/>
</dbReference>
<dbReference type="Pfam" id="PF13244">
    <property type="entry name" value="MbhD"/>
    <property type="match status" value="1"/>
</dbReference>
<dbReference type="Pfam" id="PF20501">
    <property type="entry name" value="MbhE"/>
    <property type="match status" value="1"/>
</dbReference>
<dbReference type="Pfam" id="PF00361">
    <property type="entry name" value="Proton_antipo_M"/>
    <property type="match status" value="1"/>
</dbReference>
<dbReference type="Pfam" id="PF00662">
    <property type="entry name" value="Proton_antipo_N"/>
    <property type="match status" value="1"/>
</dbReference>
<dbReference type="PRINTS" id="PR01434">
    <property type="entry name" value="NADHDHGNASE5"/>
</dbReference>
<evidence type="ECO:0000250" key="1"/>
<evidence type="ECO:0000255" key="2"/>
<evidence type="ECO:0000305" key="3"/>
<keyword id="KW-0050">Antiport</keyword>
<keyword id="KW-1003">Cell membrane</keyword>
<keyword id="KW-0406">Ion transport</keyword>
<keyword id="KW-0472">Membrane</keyword>
<keyword id="KW-1185">Reference proteome</keyword>
<keyword id="KW-0812">Transmembrane</keyword>
<keyword id="KW-1133">Transmembrane helix</keyword>
<keyword id="KW-0813">Transport</keyword>
<reference key="1">
    <citation type="book" date="2006" name="Gram positive pathogens, 2nd edition">
        <title>The Staphylococcus aureus NCTC 8325 genome.</title>
        <editorList>
            <person name="Fischetti V."/>
            <person name="Novick R."/>
            <person name="Ferretti J."/>
            <person name="Portnoy D."/>
            <person name="Rood J."/>
        </editorList>
        <authorList>
            <person name="Gillaspy A.F."/>
            <person name="Worrell V."/>
            <person name="Orvis J."/>
            <person name="Roe B.A."/>
            <person name="Dyer D.W."/>
            <person name="Iandolo J.J."/>
        </authorList>
    </citation>
    <scope>NUCLEOTIDE SEQUENCE [LARGE SCALE GENOMIC DNA]</scope>
    <source>
        <strain>NCTC 8325 / PS 47</strain>
    </source>
</reference>
<organism>
    <name type="scientific">Staphylococcus aureus (strain NCTC 8325 / PS 47)</name>
    <dbReference type="NCBI Taxonomy" id="93061"/>
    <lineage>
        <taxon>Bacteria</taxon>
        <taxon>Bacillati</taxon>
        <taxon>Bacillota</taxon>
        <taxon>Bacilli</taxon>
        <taxon>Bacillales</taxon>
        <taxon>Staphylococcaceae</taxon>
        <taxon>Staphylococcus</taxon>
    </lineage>
</organism>
<gene>
    <name type="primary">mnhA2</name>
    <name type="synonym">mrpA2</name>
    <name type="ordered locus">SAOUHSC_00625</name>
</gene>
<comment type="subunit">
    <text evidence="1">May form a heterooligomeric complex that consists of seven subunits: mnhA2, mnhB2, mnhC2, mnhD2, mnhE2, mnhF2 and mnhG2.</text>
</comment>
<comment type="subcellular location">
    <subcellularLocation>
        <location evidence="3">Cell membrane</location>
        <topology evidence="3">Multi-pass membrane protein</topology>
    </subcellularLocation>
</comment>
<comment type="similarity">
    <text evidence="3">Belongs to the CPA3 antiporters (TC 2.A.63) subunit A family.</text>
</comment>
<sequence length="800" mass="89687">MSLVYLLIAILVIMAMILLMSKRRALAKYAGYIALVAPVISSIYFLIQIPSVAKLQYLSTSIPWIKTLDINLDLRLDGLSLMFSLIISLIGIAVFFYATQYLSSRKDNLPRFYFYLTLFMFSMIGIVLSDNTILMYIFWELTSVSSFLLISYWYNNGDSQFGAIQSFMITVFGGLALLVGFIMLYIMTGTNNITEILGQADHIKNHGLFIPMIFMFLLGAFTKSAQFPFHIWLPRAMAAPTPVSAYLHSATMVKAGIFLLLRFTPLLGLSNMYVYIVTFVGLITMLFGSITALKQWDLKGILAYSTISQLGMIMAMVGIGGGYAQHQQDAIASIYVFVLFGALFHLMNHAIFKCALFMGVGILDHEAGSRDIRILSGMRQLFPKMNLVMTIAALSMAGVPFLNGFLSKEMFLDALTQTGQLSQFSLISMIAIVFVGVIASVFTFTYALYMVKEVFWTKYDSKVFTKKNIHEPWLFSLPSLILMVLVPVIFFVPNIFGKGIIVLALRAVSGGNHQIDQLAPHVSQWHGFNIPLLLTIIIILLGSVLAIKVDWKKVFTGKIRQISVSKSYEMVYRHFEKFATKRFKRVMQDRLNQYIIMTLGIFMIIIGYGYIRIGLPKVHQLHVSEFGALEIILAIVTVTIGISLIFIRQRLTMVILNGVIGFVVTLFFIAMKAPDLALTQLVVETITTILFIVSFSRLPNVPRSNANKKREIIKISVSLLMALIVVSLIFITQQTDGLSSISDFYLKADKLTGGKNIVNAILGDFRALDTLFEGLVLIITGLGIYTLLNYQDRRGQDERE</sequence>
<protein>
    <recommendedName>
        <fullName>Putative antiporter subunit mnhA2</fullName>
    </recommendedName>
    <alternativeName>
        <fullName>Mrp complex subunit A2</fullName>
    </alternativeName>
    <alternativeName>
        <fullName>Putative NADH-ubiquinone oxidoreductase subunit mnhA2</fullName>
    </alternativeName>
</protein>
<name>MNHA2_STAA8</name>
<feature type="chain" id="PRO_0000372294" description="Putative antiporter subunit mnhA2">
    <location>
        <begin position="1"/>
        <end position="800"/>
    </location>
</feature>
<feature type="transmembrane region" description="Helical" evidence="2">
    <location>
        <begin position="1"/>
        <end position="21"/>
    </location>
</feature>
<feature type="transmembrane region" description="Helical" evidence="2">
    <location>
        <begin position="33"/>
        <end position="53"/>
    </location>
</feature>
<feature type="transmembrane region" description="Helical" evidence="2">
    <location>
        <begin position="78"/>
        <end position="98"/>
    </location>
</feature>
<feature type="transmembrane region" description="Helical" evidence="2">
    <location>
        <begin position="118"/>
        <end position="138"/>
    </location>
</feature>
<feature type="transmembrane region" description="Helical" evidence="2">
    <location>
        <begin position="167"/>
        <end position="187"/>
    </location>
</feature>
<feature type="transmembrane region" description="Helical" evidence="2">
    <location>
        <begin position="207"/>
        <end position="227"/>
    </location>
</feature>
<feature type="transmembrane region" description="Helical" evidence="2">
    <location>
        <begin position="241"/>
        <end position="261"/>
    </location>
</feature>
<feature type="transmembrane region" description="Helical" evidence="2">
    <location>
        <begin position="273"/>
        <end position="293"/>
    </location>
</feature>
<feature type="transmembrane region" description="Helical" evidence="2">
    <location>
        <begin position="300"/>
        <end position="320"/>
    </location>
</feature>
<feature type="transmembrane region" description="Helical" evidence="2">
    <location>
        <begin position="331"/>
        <end position="351"/>
    </location>
</feature>
<feature type="transmembrane region" description="Helical" evidence="2">
    <location>
        <begin position="387"/>
        <end position="407"/>
    </location>
</feature>
<feature type="transmembrane region" description="Helical" evidence="2">
    <location>
        <begin position="424"/>
        <end position="444"/>
    </location>
</feature>
<feature type="transmembrane region" description="Helical" evidence="2">
    <location>
        <begin position="472"/>
        <end position="492"/>
    </location>
</feature>
<feature type="transmembrane region" description="Helical" evidence="2">
    <location>
        <begin position="527"/>
        <end position="547"/>
    </location>
</feature>
<feature type="transmembrane region" description="Helical" evidence="2">
    <location>
        <begin position="595"/>
        <end position="615"/>
    </location>
</feature>
<feature type="transmembrane region" description="Helical" evidence="2">
    <location>
        <begin position="627"/>
        <end position="647"/>
    </location>
</feature>
<feature type="transmembrane region" description="Helical" evidence="2">
    <location>
        <begin position="651"/>
        <end position="671"/>
    </location>
</feature>
<feature type="transmembrane region" description="Helical" evidence="2">
    <location>
        <begin position="676"/>
        <end position="696"/>
    </location>
</feature>
<feature type="transmembrane region" description="Helical" evidence="2">
    <location>
        <begin position="712"/>
        <end position="732"/>
    </location>
</feature>
<feature type="transmembrane region" description="Helical" evidence="2">
    <location>
        <begin position="768"/>
        <end position="788"/>
    </location>
</feature>
<proteinExistence type="inferred from homology"/>